<accession>Q12LU7</accession>
<comment type="function">
    <text evidence="1">Nucleoside triphosphate pyrophosphatase that hydrolyzes 7-methyl-GTP (m(7)GTP). May have a dual role in cell division arrest and in preventing the incorporation of modified nucleotides into cellular nucleic acids.</text>
</comment>
<comment type="catalytic activity">
    <reaction evidence="1">
        <text>N(7)-methyl-GTP + H2O = N(7)-methyl-GMP + diphosphate + H(+)</text>
        <dbReference type="Rhea" id="RHEA:58744"/>
        <dbReference type="ChEBI" id="CHEBI:15377"/>
        <dbReference type="ChEBI" id="CHEBI:15378"/>
        <dbReference type="ChEBI" id="CHEBI:33019"/>
        <dbReference type="ChEBI" id="CHEBI:58285"/>
        <dbReference type="ChEBI" id="CHEBI:87133"/>
    </reaction>
</comment>
<comment type="cofactor">
    <cofactor evidence="1">
        <name>a divalent metal cation</name>
        <dbReference type="ChEBI" id="CHEBI:60240"/>
    </cofactor>
</comment>
<comment type="subcellular location">
    <subcellularLocation>
        <location evidence="1">Cytoplasm</location>
    </subcellularLocation>
</comment>
<comment type="similarity">
    <text evidence="1">Belongs to the Maf family. YceF subfamily.</text>
</comment>
<gene>
    <name type="ordered locus">Sden_2299</name>
</gene>
<sequence>MKTTLILASTSPYRQQLLQKLTPNFTCVSPEVDETPLADETAQALVVRLAQAKAIAGAERYLAELGLSNLHTAAEALVIGSDQVAVIDGAIIGKPLTQANAINQLQQASGKAITFYTGLAVYNSHSHKMTCEIVPFTVHFRTLSLAQITYYVETELPLYCAGSFKSEGLGIALFERLEGDDPNTLIGLPLIALIDMLAEHGETVLS</sequence>
<dbReference type="EC" id="3.6.1.-" evidence="1"/>
<dbReference type="EMBL" id="CP000302">
    <property type="protein sequence ID" value="ABE55579.1"/>
    <property type="molecule type" value="Genomic_DNA"/>
</dbReference>
<dbReference type="RefSeq" id="WP_011496730.1">
    <property type="nucleotide sequence ID" value="NC_007954.1"/>
</dbReference>
<dbReference type="SMR" id="Q12LU7"/>
<dbReference type="STRING" id="318161.Sden_2299"/>
<dbReference type="KEGG" id="sdn:Sden_2299"/>
<dbReference type="eggNOG" id="COG0424">
    <property type="taxonomic scope" value="Bacteria"/>
</dbReference>
<dbReference type="HOGENOM" id="CLU_040416_1_0_6"/>
<dbReference type="OrthoDB" id="9813694at2"/>
<dbReference type="Proteomes" id="UP000001982">
    <property type="component" value="Chromosome"/>
</dbReference>
<dbReference type="GO" id="GO:0005737">
    <property type="term" value="C:cytoplasm"/>
    <property type="evidence" value="ECO:0007669"/>
    <property type="project" value="UniProtKB-SubCell"/>
</dbReference>
<dbReference type="GO" id="GO:0047429">
    <property type="term" value="F:nucleoside triphosphate diphosphatase activity"/>
    <property type="evidence" value="ECO:0007669"/>
    <property type="project" value="InterPro"/>
</dbReference>
<dbReference type="GO" id="GO:0009117">
    <property type="term" value="P:nucleotide metabolic process"/>
    <property type="evidence" value="ECO:0007669"/>
    <property type="project" value="UniProtKB-KW"/>
</dbReference>
<dbReference type="CDD" id="cd00555">
    <property type="entry name" value="Maf"/>
    <property type="match status" value="1"/>
</dbReference>
<dbReference type="FunFam" id="3.90.950.10:FF:000005">
    <property type="entry name" value="7-methyl-GTP pyrophosphatase"/>
    <property type="match status" value="1"/>
</dbReference>
<dbReference type="Gene3D" id="3.90.950.10">
    <property type="match status" value="1"/>
</dbReference>
<dbReference type="HAMAP" id="MF_00528">
    <property type="entry name" value="Maf"/>
    <property type="match status" value="1"/>
</dbReference>
<dbReference type="InterPro" id="IPR029001">
    <property type="entry name" value="ITPase-like_fam"/>
</dbReference>
<dbReference type="InterPro" id="IPR003697">
    <property type="entry name" value="Maf-like"/>
</dbReference>
<dbReference type="NCBIfam" id="TIGR00172">
    <property type="entry name" value="maf"/>
    <property type="match status" value="1"/>
</dbReference>
<dbReference type="PANTHER" id="PTHR43213:SF10">
    <property type="entry name" value="7-METHYL-GTP PYROPHOSPHATASE"/>
    <property type="match status" value="1"/>
</dbReference>
<dbReference type="PANTHER" id="PTHR43213">
    <property type="entry name" value="BIFUNCTIONAL DTTP/UTP PYROPHOSPHATASE/METHYLTRANSFERASE PROTEIN-RELATED"/>
    <property type="match status" value="1"/>
</dbReference>
<dbReference type="Pfam" id="PF02545">
    <property type="entry name" value="Maf"/>
    <property type="match status" value="1"/>
</dbReference>
<dbReference type="PIRSF" id="PIRSF006305">
    <property type="entry name" value="Maf"/>
    <property type="match status" value="1"/>
</dbReference>
<dbReference type="SUPFAM" id="SSF52972">
    <property type="entry name" value="ITPase-like"/>
    <property type="match status" value="1"/>
</dbReference>
<feature type="chain" id="PRO_0000267423" description="7-methyl-GTP pyrophosphatase">
    <location>
        <begin position="1"/>
        <end position="206"/>
    </location>
</feature>
<feature type="active site" description="Proton acceptor" evidence="1">
    <location>
        <position position="82"/>
    </location>
</feature>
<feature type="site" description="Important for substrate specificity" evidence="1">
    <location>
        <position position="13"/>
    </location>
</feature>
<feature type="site" description="Important for substrate specificity" evidence="1">
    <location>
        <position position="83"/>
    </location>
</feature>
<feature type="site" description="Important for substrate specificity" evidence="1">
    <location>
        <position position="167"/>
    </location>
</feature>
<proteinExistence type="inferred from homology"/>
<organism>
    <name type="scientific">Shewanella denitrificans (strain OS217 / ATCC BAA-1090 / DSM 15013)</name>
    <dbReference type="NCBI Taxonomy" id="318161"/>
    <lineage>
        <taxon>Bacteria</taxon>
        <taxon>Pseudomonadati</taxon>
        <taxon>Pseudomonadota</taxon>
        <taxon>Gammaproteobacteria</taxon>
        <taxon>Alteromonadales</taxon>
        <taxon>Shewanellaceae</taxon>
        <taxon>Shewanella</taxon>
    </lineage>
</organism>
<evidence type="ECO:0000255" key="1">
    <source>
        <dbReference type="HAMAP-Rule" id="MF_00528"/>
    </source>
</evidence>
<reference key="1">
    <citation type="submission" date="2006-03" db="EMBL/GenBank/DDBJ databases">
        <title>Complete sequence of Shewanella denitrificans OS217.</title>
        <authorList>
            <consortium name="US DOE Joint Genome Institute"/>
            <person name="Copeland A."/>
            <person name="Lucas S."/>
            <person name="Lapidus A."/>
            <person name="Barry K."/>
            <person name="Detter J.C."/>
            <person name="Glavina del Rio T."/>
            <person name="Hammon N."/>
            <person name="Israni S."/>
            <person name="Dalin E."/>
            <person name="Tice H."/>
            <person name="Pitluck S."/>
            <person name="Brettin T."/>
            <person name="Bruce D."/>
            <person name="Han C."/>
            <person name="Tapia R."/>
            <person name="Gilna P."/>
            <person name="Kiss H."/>
            <person name="Schmutz J."/>
            <person name="Larimer F."/>
            <person name="Land M."/>
            <person name="Hauser L."/>
            <person name="Kyrpides N."/>
            <person name="Lykidis A."/>
            <person name="Richardson P."/>
        </authorList>
    </citation>
    <scope>NUCLEOTIDE SEQUENCE [LARGE SCALE GENOMIC DNA]</scope>
    <source>
        <strain>OS217 / ATCC BAA-1090 / DSM 15013</strain>
    </source>
</reference>
<name>NTPPB_SHEDO</name>
<protein>
    <recommendedName>
        <fullName evidence="1">7-methyl-GTP pyrophosphatase</fullName>
        <shortName evidence="1">m(7)GTP pyrophosphatase</shortName>
        <ecNumber evidence="1">3.6.1.-</ecNumber>
    </recommendedName>
</protein>
<keyword id="KW-0963">Cytoplasm</keyword>
<keyword id="KW-0378">Hydrolase</keyword>
<keyword id="KW-0546">Nucleotide metabolism</keyword>
<keyword id="KW-1185">Reference proteome</keyword>